<evidence type="ECO:0000269" key="1">
    <source>
    </source>
</evidence>
<evidence type="ECO:0000269" key="2">
    <source>
    </source>
</evidence>
<evidence type="ECO:0000269" key="3">
    <source>
    </source>
</evidence>
<evidence type="ECO:0000269" key="4">
    <source>
    </source>
</evidence>
<evidence type="ECO:0000269" key="5">
    <source>
    </source>
</evidence>
<evidence type="ECO:0000269" key="6">
    <source>
    </source>
</evidence>
<evidence type="ECO:0000269" key="7">
    <source>
    </source>
</evidence>
<evidence type="ECO:0000303" key="8">
    <source>
    </source>
</evidence>
<evidence type="ECO:0000305" key="9"/>
<evidence type="ECO:0000305" key="10">
    <source>
    </source>
</evidence>
<evidence type="ECO:0000312" key="11">
    <source>
        <dbReference type="EMBL" id="BAD69288.1"/>
    </source>
</evidence>
<evidence type="ECO:0000312" key="12">
    <source>
        <dbReference type="EMBL" id="BAS96220.1"/>
    </source>
</evidence>
<evidence type="ECO:0007829" key="13">
    <source>
        <dbReference type="PDB" id="5HZG"/>
    </source>
</evidence>
<evidence type="ECO:0007829" key="14">
    <source>
        <dbReference type="PDB" id="6BRP"/>
    </source>
</evidence>
<evidence type="ECO:0007829" key="15">
    <source>
        <dbReference type="PDB" id="7SA1"/>
    </source>
</evidence>
<gene>
    <name evidence="8" type="primary">D3</name>
    <name evidence="12" type="ordered locus">Os06g0154200</name>
    <name evidence="9" type="ordered locus">LOC_Os06g06050</name>
    <name evidence="11" type="ORF">OSJNBa0085L11.6-1</name>
</gene>
<organism>
    <name type="scientific">Oryza sativa subsp. japonica</name>
    <name type="common">Rice</name>
    <dbReference type="NCBI Taxonomy" id="39947"/>
    <lineage>
        <taxon>Eukaryota</taxon>
        <taxon>Viridiplantae</taxon>
        <taxon>Streptophyta</taxon>
        <taxon>Embryophyta</taxon>
        <taxon>Tracheophyta</taxon>
        <taxon>Spermatophyta</taxon>
        <taxon>Magnoliopsida</taxon>
        <taxon>Liliopsida</taxon>
        <taxon>Poales</taxon>
        <taxon>Poaceae</taxon>
        <taxon>BOP clade</taxon>
        <taxon>Oryzoideae</taxon>
        <taxon>Oryzeae</taxon>
        <taxon>Oryzinae</taxon>
        <taxon>Oryza</taxon>
        <taxon>Oryza sativa</taxon>
    </lineage>
</organism>
<name>MAX2_ORYSJ</name>
<protein>
    <recommendedName>
        <fullName evidence="9">F-box/LRR-repeat MAX2 homolog</fullName>
    </recommendedName>
    <alternativeName>
        <fullName evidence="9">F-box and leucine-rich repeat MAX2 homolog</fullName>
    </alternativeName>
    <alternativeName>
        <fullName evidence="8">Protein DWARF 3</fullName>
    </alternativeName>
</protein>
<keyword id="KW-0002">3D-structure</keyword>
<keyword id="KW-0433">Leucine-rich repeat</keyword>
<keyword id="KW-0539">Nucleus</keyword>
<keyword id="KW-1185">Reference proteome</keyword>
<keyword id="KW-0677">Repeat</keyword>
<keyword id="KW-0833">Ubl conjugation pathway</keyword>
<feature type="chain" id="PRO_0000119967" description="F-box/LRR-repeat MAX2 homolog">
    <location>
        <begin position="1"/>
        <end position="720"/>
    </location>
</feature>
<feature type="domain" description="F-box">
    <location>
        <begin position="14"/>
        <end position="60"/>
    </location>
</feature>
<feature type="repeat" description="LRR 1">
    <location>
        <begin position="71"/>
        <end position="134"/>
    </location>
</feature>
<feature type="repeat" description="LRR 2">
    <location>
        <begin position="135"/>
        <end position="158"/>
    </location>
</feature>
<feature type="repeat" description="LRR 3">
    <location>
        <begin position="159"/>
        <end position="189"/>
    </location>
</feature>
<feature type="repeat" description="LRR 4">
    <location>
        <begin position="190"/>
        <end position="218"/>
    </location>
</feature>
<feature type="repeat" description="LRR 5">
    <location>
        <begin position="219"/>
        <end position="247"/>
    </location>
</feature>
<feature type="repeat" description="LRR 6">
    <location>
        <begin position="248"/>
        <end position="279"/>
    </location>
</feature>
<feature type="repeat" description="LRR 7">
    <location>
        <begin position="280"/>
        <end position="316"/>
    </location>
</feature>
<feature type="repeat" description="LRR 8">
    <location>
        <begin position="317"/>
        <end position="344"/>
    </location>
</feature>
<feature type="repeat" description="LRR 9">
    <location>
        <begin position="345"/>
        <end position="372"/>
    </location>
</feature>
<feature type="repeat" description="LRR 10">
    <location>
        <begin position="373"/>
        <end position="398"/>
    </location>
</feature>
<feature type="repeat" description="LRR 11">
    <location>
        <begin position="399"/>
        <end position="435"/>
    </location>
</feature>
<feature type="repeat" description="LRR 12">
    <location>
        <begin position="436"/>
        <end position="452"/>
    </location>
</feature>
<feature type="repeat" description="LRR 13">
    <location>
        <begin position="453"/>
        <end position="510"/>
    </location>
</feature>
<feature type="repeat" description="LRR 14">
    <location>
        <begin position="511"/>
        <end position="537"/>
    </location>
</feature>
<feature type="repeat" description="LRR 15">
    <location>
        <begin position="538"/>
        <end position="571"/>
    </location>
</feature>
<feature type="repeat" description="LRR 16">
    <location>
        <begin position="572"/>
        <end position="606"/>
    </location>
</feature>
<feature type="repeat" description="LRR 17">
    <location>
        <begin position="607"/>
        <end position="644"/>
    </location>
</feature>
<feature type="repeat" description="LRR 18">
    <location>
        <begin position="645"/>
        <end position="720"/>
    </location>
</feature>
<feature type="mutagenesis site" description="In d3; dwarf and high tillering phenotypes; when associated with W-36." evidence="5">
    <original>P</original>
    <variation>S</variation>
    <location>
        <position position="21"/>
    </location>
</feature>
<feature type="mutagenesis site" description="In d3; dwarf and high tillering phenotypes; when associated with S-21." evidence="5">
    <original>R</original>
    <variation>W</variation>
    <location>
        <position position="36"/>
    </location>
</feature>
<feature type="sequence conflict" description="In Ref. 4; AK065478." evidence="9" ref="4">
    <original>M</original>
    <variation>I</variation>
    <location>
        <position position="521"/>
    </location>
</feature>
<feature type="helix" evidence="14">
    <location>
        <begin position="16"/>
        <end position="19"/>
    </location>
</feature>
<feature type="helix" evidence="14">
    <location>
        <begin position="22"/>
        <end position="29"/>
    </location>
</feature>
<feature type="helix" evidence="14">
    <location>
        <begin position="35"/>
        <end position="44"/>
    </location>
</feature>
<feature type="helix" evidence="14">
    <location>
        <begin position="46"/>
        <end position="55"/>
    </location>
</feature>
<feature type="strand" evidence="14">
    <location>
        <begin position="58"/>
        <end position="61"/>
    </location>
</feature>
<feature type="helix" evidence="14">
    <location>
        <begin position="68"/>
        <end position="71"/>
    </location>
</feature>
<feature type="strand" evidence="14">
    <location>
        <begin position="84"/>
        <end position="86"/>
    </location>
</feature>
<feature type="strand" evidence="13">
    <location>
        <begin position="91"/>
        <end position="95"/>
    </location>
</feature>
<feature type="helix" evidence="14">
    <location>
        <begin position="125"/>
        <end position="142"/>
    </location>
</feature>
<feature type="strand" evidence="14">
    <location>
        <begin position="148"/>
        <end position="152"/>
    </location>
</feature>
<feature type="helix" evidence="14">
    <location>
        <begin position="157"/>
        <end position="166"/>
    </location>
</feature>
<feature type="turn" evidence="14">
    <location>
        <begin position="167"/>
        <end position="169"/>
    </location>
</feature>
<feature type="strand" evidence="14">
    <location>
        <begin position="172"/>
        <end position="177"/>
    </location>
</feature>
<feature type="turn" evidence="14">
    <location>
        <begin position="187"/>
        <end position="191"/>
    </location>
</feature>
<feature type="helix" evidence="14">
    <location>
        <begin position="192"/>
        <end position="197"/>
    </location>
</feature>
<feature type="strand" evidence="14">
    <location>
        <begin position="203"/>
        <end position="209"/>
    </location>
</feature>
<feature type="helix" evidence="14">
    <location>
        <begin position="213"/>
        <end position="221"/>
    </location>
</feature>
<feature type="helix" evidence="14">
    <location>
        <begin position="224"/>
        <end position="227"/>
    </location>
</feature>
<feature type="strand" evidence="14">
    <location>
        <begin position="232"/>
        <end position="234"/>
    </location>
</feature>
<feature type="helix" evidence="14">
    <location>
        <begin position="237"/>
        <end position="239"/>
    </location>
</feature>
<feature type="helix" evidence="14">
    <location>
        <begin position="246"/>
        <end position="255"/>
    </location>
</feature>
<feature type="strand" evidence="14">
    <location>
        <begin position="260"/>
        <end position="266"/>
    </location>
</feature>
<feature type="helix" evidence="14">
    <location>
        <begin position="278"/>
        <end position="287"/>
    </location>
</feature>
<feature type="strand" evidence="14">
    <location>
        <begin position="292"/>
        <end position="297"/>
    </location>
</feature>
<feature type="turn" evidence="15">
    <location>
        <begin position="302"/>
        <end position="304"/>
    </location>
</feature>
<feature type="helix" evidence="14">
    <location>
        <begin position="315"/>
        <end position="323"/>
    </location>
</feature>
<feature type="strand" evidence="14">
    <location>
        <begin position="330"/>
        <end position="339"/>
    </location>
</feature>
<feature type="helix" evidence="14">
    <location>
        <begin position="343"/>
        <end position="352"/>
    </location>
</feature>
<feature type="strand" evidence="14">
    <location>
        <begin position="358"/>
        <end position="364"/>
    </location>
</feature>
<feature type="strand" evidence="14">
    <location>
        <begin position="372"/>
        <end position="374"/>
    </location>
</feature>
<feature type="helix" evidence="14">
    <location>
        <begin position="377"/>
        <end position="380"/>
    </location>
</feature>
<feature type="strand" evidence="14">
    <location>
        <begin position="385"/>
        <end position="391"/>
    </location>
</feature>
<feature type="helix" evidence="14">
    <location>
        <begin position="397"/>
        <end position="406"/>
    </location>
</feature>
<feature type="strand" evidence="14">
    <location>
        <begin position="412"/>
        <end position="417"/>
    </location>
</feature>
<feature type="helix" evidence="14">
    <location>
        <begin position="423"/>
        <end position="432"/>
    </location>
</feature>
<feature type="turn" evidence="14">
    <location>
        <begin position="433"/>
        <end position="436"/>
    </location>
</feature>
<feature type="strand" evidence="14">
    <location>
        <begin position="439"/>
        <end position="444"/>
    </location>
</feature>
<feature type="helix" evidence="14">
    <location>
        <begin position="450"/>
        <end position="456"/>
    </location>
</feature>
<feature type="helix" evidence="14">
    <location>
        <begin position="458"/>
        <end position="460"/>
    </location>
</feature>
<feature type="turn" evidence="14">
    <location>
        <begin position="461"/>
        <end position="463"/>
    </location>
</feature>
<feature type="strand" evidence="14">
    <location>
        <begin position="466"/>
        <end position="470"/>
    </location>
</feature>
<feature type="strand" evidence="14">
    <location>
        <begin position="524"/>
        <end position="530"/>
    </location>
</feature>
<feature type="helix" evidence="14">
    <location>
        <begin position="538"/>
        <end position="541"/>
    </location>
</feature>
<feature type="strand" evidence="14">
    <location>
        <begin position="551"/>
        <end position="558"/>
    </location>
</feature>
<feature type="strand" evidence="15">
    <location>
        <begin position="560"/>
        <end position="563"/>
    </location>
</feature>
<feature type="helix" evidence="14">
    <location>
        <begin position="574"/>
        <end position="577"/>
    </location>
</feature>
<feature type="strand" evidence="14">
    <location>
        <begin position="585"/>
        <end position="592"/>
    </location>
</feature>
<feature type="strand" evidence="13">
    <location>
        <begin position="594"/>
        <end position="596"/>
    </location>
</feature>
<feature type="helix" evidence="14">
    <location>
        <begin position="606"/>
        <end position="615"/>
    </location>
</feature>
<feature type="helix" evidence="14">
    <location>
        <begin position="618"/>
        <end position="620"/>
    </location>
</feature>
<feature type="strand" evidence="14">
    <location>
        <begin position="626"/>
        <end position="630"/>
    </location>
</feature>
<feature type="helix" evidence="14">
    <location>
        <begin position="644"/>
        <end position="650"/>
    </location>
</feature>
<feature type="strand" evidence="14">
    <location>
        <begin position="657"/>
        <end position="664"/>
    </location>
</feature>
<feature type="helix" evidence="14">
    <location>
        <begin position="667"/>
        <end position="669"/>
    </location>
</feature>
<feature type="helix" evidence="14">
    <location>
        <begin position="670"/>
        <end position="673"/>
    </location>
</feature>
<feature type="strand" evidence="13">
    <location>
        <begin position="676"/>
        <end position="678"/>
    </location>
</feature>
<feature type="strand" evidence="14">
    <location>
        <begin position="681"/>
        <end position="684"/>
    </location>
</feature>
<feature type="strand" evidence="14">
    <location>
        <begin position="688"/>
        <end position="690"/>
    </location>
</feature>
<feature type="strand" evidence="13">
    <location>
        <begin position="694"/>
        <end position="696"/>
    </location>
</feature>
<feature type="helix" evidence="14">
    <location>
        <begin position="706"/>
        <end position="715"/>
    </location>
</feature>
<dbReference type="EMBL" id="AP006533">
    <property type="protein sequence ID" value="BAD69288.1"/>
    <property type="molecule type" value="Genomic_DNA"/>
</dbReference>
<dbReference type="EMBL" id="AP006533">
    <property type="protein sequence ID" value="BAD69289.1"/>
    <property type="status" value="ALT_SEQ"/>
    <property type="molecule type" value="Genomic_DNA"/>
</dbReference>
<dbReference type="EMBL" id="AP008212">
    <property type="protein sequence ID" value="BAH93336.1"/>
    <property type="molecule type" value="Genomic_DNA"/>
</dbReference>
<dbReference type="EMBL" id="AP014962">
    <property type="protein sequence ID" value="BAS96220.1"/>
    <property type="molecule type" value="Genomic_DNA"/>
</dbReference>
<dbReference type="EMBL" id="AK065478">
    <property type="status" value="NOT_ANNOTATED_CDS"/>
    <property type="molecule type" value="mRNA"/>
</dbReference>
<dbReference type="RefSeq" id="XP_015643693.1">
    <property type="nucleotide sequence ID" value="XM_015788207.1"/>
</dbReference>
<dbReference type="RefSeq" id="XP_015643694.1">
    <property type="nucleotide sequence ID" value="XM_015788208.1"/>
</dbReference>
<dbReference type="PDB" id="5HYW">
    <property type="method" value="X-ray"/>
    <property type="resolution" value="3.01 A"/>
    <property type="chains" value="A/C=1-720"/>
</dbReference>
<dbReference type="PDB" id="5HZG">
    <property type="method" value="X-ray"/>
    <property type="resolution" value="3.30 A"/>
    <property type="chains" value="B/F=1-720"/>
</dbReference>
<dbReference type="PDB" id="6BRO">
    <property type="method" value="X-ray"/>
    <property type="resolution" value="2.50 A"/>
    <property type="chains" value="B/D=1-720"/>
</dbReference>
<dbReference type="PDB" id="6BRP">
    <property type="method" value="X-ray"/>
    <property type="resolution" value="2.39 A"/>
    <property type="chains" value="B/D=1-476, B/D=516-720"/>
</dbReference>
<dbReference type="PDB" id="6BRQ">
    <property type="method" value="X-ray"/>
    <property type="resolution" value="2.99 A"/>
    <property type="chains" value="B/D=1-476, B/D=516-720"/>
</dbReference>
<dbReference type="PDB" id="7SA1">
    <property type="method" value="X-ray"/>
    <property type="resolution" value="3.21 A"/>
    <property type="chains" value="B/D=1-720"/>
</dbReference>
<dbReference type="PDB" id="8IF6">
    <property type="method" value="EM"/>
    <property type="resolution" value="7.09 A"/>
    <property type="chains" value="A=1-720"/>
</dbReference>
<dbReference type="PDBsum" id="5HYW"/>
<dbReference type="PDBsum" id="5HZG"/>
<dbReference type="PDBsum" id="6BRO"/>
<dbReference type="PDBsum" id="6BRP"/>
<dbReference type="PDBsum" id="6BRQ"/>
<dbReference type="PDBsum" id="7SA1"/>
<dbReference type="PDBsum" id="8IF6"/>
<dbReference type="EMDB" id="EMD-35402"/>
<dbReference type="SMR" id="Q5VMP0"/>
<dbReference type="FunCoup" id="Q5VMP0">
    <property type="interactions" value="1759"/>
</dbReference>
<dbReference type="STRING" id="39947.Q5VMP0"/>
<dbReference type="PaxDb" id="39947-Q5VMP0"/>
<dbReference type="EnsemblPlants" id="Os06t0154200-01">
    <property type="protein sequence ID" value="Os06t0154200-01"/>
    <property type="gene ID" value="Os06g0154200"/>
</dbReference>
<dbReference type="Gramene" id="Os06t0154200-01">
    <property type="protein sequence ID" value="Os06t0154200-01"/>
    <property type="gene ID" value="Os06g0154200"/>
</dbReference>
<dbReference type="KEGG" id="dosa:Os06g0154200"/>
<dbReference type="eggNOG" id="ENOG502QS13">
    <property type="taxonomic scope" value="Eukaryota"/>
</dbReference>
<dbReference type="InParanoid" id="Q5VMP0"/>
<dbReference type="OMA" id="IACMFDP"/>
<dbReference type="OrthoDB" id="550575at2759"/>
<dbReference type="PlantReactome" id="R-OSA-5654828">
    <property type="pathway name" value="Strigolactone signaling"/>
</dbReference>
<dbReference type="Proteomes" id="UP000000763">
    <property type="component" value="Chromosome 6"/>
</dbReference>
<dbReference type="Proteomes" id="UP000059680">
    <property type="component" value="Chromosome 6"/>
</dbReference>
<dbReference type="ExpressionAtlas" id="Q5VMP0">
    <property type="expression patterns" value="baseline and differential"/>
</dbReference>
<dbReference type="GO" id="GO:0005634">
    <property type="term" value="C:nucleus"/>
    <property type="evidence" value="ECO:0000314"/>
    <property type="project" value="UniProtKB"/>
</dbReference>
<dbReference type="GO" id="GO:0019005">
    <property type="term" value="C:SCF ubiquitin ligase complex"/>
    <property type="evidence" value="ECO:0000314"/>
    <property type="project" value="UniProtKB"/>
</dbReference>
<dbReference type="GO" id="GO:0009926">
    <property type="term" value="P:auxin polar transport"/>
    <property type="evidence" value="ECO:0007669"/>
    <property type="project" value="EnsemblPlants"/>
</dbReference>
<dbReference type="GO" id="GO:0061137">
    <property type="term" value="P:bud dilation"/>
    <property type="evidence" value="ECO:0000315"/>
    <property type="project" value="Gramene"/>
</dbReference>
<dbReference type="GO" id="GO:0010187">
    <property type="term" value="P:negative regulation of seed germination"/>
    <property type="evidence" value="ECO:0007669"/>
    <property type="project" value="EnsemblPlants"/>
</dbReference>
<dbReference type="GO" id="GO:1902584">
    <property type="term" value="P:positive regulation of response to water deprivation"/>
    <property type="evidence" value="ECO:0007669"/>
    <property type="project" value="EnsemblPlants"/>
</dbReference>
<dbReference type="GO" id="GO:0009934">
    <property type="term" value="P:regulation of meristem structural organization"/>
    <property type="evidence" value="ECO:0007669"/>
    <property type="project" value="EnsemblPlants"/>
</dbReference>
<dbReference type="GO" id="GO:1900618">
    <property type="term" value="P:regulation of shoot system morphogenesis"/>
    <property type="evidence" value="ECO:0000315"/>
    <property type="project" value="UniProtKB"/>
</dbReference>
<dbReference type="GO" id="GO:0009416">
    <property type="term" value="P:response to light stimulus"/>
    <property type="evidence" value="ECO:0007669"/>
    <property type="project" value="EnsemblPlants"/>
</dbReference>
<dbReference type="GO" id="GO:0009414">
    <property type="term" value="P:response to water deprivation"/>
    <property type="evidence" value="ECO:0007669"/>
    <property type="project" value="EnsemblPlants"/>
</dbReference>
<dbReference type="GO" id="GO:0031146">
    <property type="term" value="P:SCF-dependent proteasomal ubiquitin-dependent protein catabolic process"/>
    <property type="evidence" value="ECO:0000314"/>
    <property type="project" value="UniProtKB"/>
</dbReference>
<dbReference type="GO" id="GO:0010016">
    <property type="term" value="P:shoot system morphogenesis"/>
    <property type="evidence" value="ECO:0007669"/>
    <property type="project" value="EnsemblPlants"/>
</dbReference>
<dbReference type="CDD" id="cd22140">
    <property type="entry name" value="F-box_D3-like"/>
    <property type="match status" value="1"/>
</dbReference>
<dbReference type="FunFam" id="3.80.10.10:FF:000712">
    <property type="entry name" value="F-box/LRR-repeat MAX2 homolog"/>
    <property type="match status" value="1"/>
</dbReference>
<dbReference type="FunFam" id="1.20.1280.50:FF:000023">
    <property type="entry name" value="F-box/LRR-repeat protein 4"/>
    <property type="match status" value="1"/>
</dbReference>
<dbReference type="Gene3D" id="1.20.1280.50">
    <property type="match status" value="1"/>
</dbReference>
<dbReference type="Gene3D" id="3.80.10.10">
    <property type="entry name" value="Ribonuclease Inhibitor"/>
    <property type="match status" value="1"/>
</dbReference>
<dbReference type="InterPro" id="IPR036047">
    <property type="entry name" value="F-box-like_dom_sf"/>
</dbReference>
<dbReference type="InterPro" id="IPR001810">
    <property type="entry name" value="F-box_dom"/>
</dbReference>
<dbReference type="InterPro" id="IPR006553">
    <property type="entry name" value="Leu-rich_rpt_Cys-con_subtyp"/>
</dbReference>
<dbReference type="InterPro" id="IPR032675">
    <property type="entry name" value="LRR_dom_sf"/>
</dbReference>
<dbReference type="PANTHER" id="PTHR13318:SF245">
    <property type="entry name" value="F-BOX_LRR-REPEAT MAX2 HOMOLOG"/>
    <property type="match status" value="1"/>
</dbReference>
<dbReference type="PANTHER" id="PTHR13318">
    <property type="entry name" value="PARTNER OF PAIRED, ISOFORM B-RELATED"/>
    <property type="match status" value="1"/>
</dbReference>
<dbReference type="Pfam" id="PF12937">
    <property type="entry name" value="F-box-like"/>
    <property type="match status" value="1"/>
</dbReference>
<dbReference type="SMART" id="SM00367">
    <property type="entry name" value="LRR_CC"/>
    <property type="match status" value="4"/>
</dbReference>
<dbReference type="SUPFAM" id="SSF81383">
    <property type="entry name" value="F-box domain"/>
    <property type="match status" value="1"/>
</dbReference>
<dbReference type="SUPFAM" id="SSF52047">
    <property type="entry name" value="RNI-like"/>
    <property type="match status" value="1"/>
</dbReference>
<accession>Q5VMP0</accession>
<accession>A0A0P0WSH6</accession>
<accession>C7J3G5</accession>
<accession>Q5VMP1</accession>
<sequence>MAEEEEVEEGRSSSSAILDLPEPLLLHILSFLTDVRSRHRAALACGRMRAAERATRSELSLRGDPRSPGFLFLSHAFRFPALEHLDLSLVSPWGHPLLSSVPPCGGGGGGAPSASSSSGMNVYHPEAISEQNAFIAARLAGCFPAVTSLAVYCRDPTTLANLTPHWQASLRRVKLVRWHQRPPTLPDGADLEPLLETCAALRELDLSEFYCWTEDVVRALTTHPSATAALTHLDLGLAAATDGFKSSELGPIAASCPNLRKLVAPCLFNPRFSDCVGDDALLSLATSCPRLTVLRLSEPFEAAANIQREEAAITVAGLVAFFAALPALEDFTMDLQHNVLEAAPAMEALARRCPRIKFLTLGSFQGLCKASWLHLDGVAVCGGLESLYMKNCQDLTDASLAAIGRGCRRLAKFGIHGCDLVTSAGIRRLAFTLRPTLKEVTVLHCRLLHTAECLTALSPIRDRIESLEINCVWNTTEQPCSVANGTTTECDPEDDELGEVYESAAKKCRYMEFDDLGSWEMLRSLSLWFSAGQLLSPLISAGLDSCPVLEEISIKVEGDCRTCPRPAPRTIFGLSDLAGFPVLAKMKLDLSEAVGYALTAPTGQMDLSLWERFYLHGIESLQTLYELDYWPPQDKDVHHRSLTLPAVGLIQRCVGLRKLFIHGTTHEHFMTFFLSIPNLRDMQLREDYYPAPENDLMFTEMRAESWLRFEVQLNSRQIDD</sequence>
<comment type="function">
    <text evidence="1 4 6 7">Involved in strigolactone (SL) signaling (PubMed:23025475, PubMed:24336215, PubMed:24616269). Required for responses to SLs and the establishment of arbuscular mycorrhiza symbiosis in rice (PubMed:23025475). Strigolactone-dependent association of D3 with D14 and D53 (a repressor of SL signaling) triggers D53 ubiquitination and degradation (PubMed:24616269). Controls tillering by suppressing axillary bud activity (PubMed:15659436). Tiller is a specialized grain-bearing branch that is formed on the unelongated basal internode and grows independently of the mother stem (culm) by means of its own adventitious roots (PubMed:15659436).</text>
</comment>
<comment type="subunit">
    <text evidence="5 6 7 10">Associates to a SCF (SKP1-CUL1-F-box protein) E3 ubiquitin-protein ligase complex (Probable). Interacts with D14 in a strigolactone-dependent manner (PubMed:24336200, PubMed:24336215, PubMed:24616269). Interacts with SKP1, SKP5 and SKP20 (PubMed:24616269).</text>
</comment>
<comment type="subcellular location">
    <subcellularLocation>
        <location evidence="7">Nucleus</location>
    </subcellularLocation>
</comment>
<comment type="tissue specificity">
    <text evidence="1 7">Expressed in leaves (PubMed:15659436). Expressed in roots, culms, leaf blades, leaf sheaths, shoot bases and panicles (PubMed:24616269).</text>
</comment>
<comment type="disruption phenotype">
    <text evidence="1 2 3 7">Increased number of tillers and reduced plant height.</text>
</comment>
<comment type="sequence caution" evidence="9">
    <conflict type="erroneous gene model prediction">
        <sequence resource="EMBL-CDS" id="BAD69289"/>
    </conflict>
</comment>
<proteinExistence type="evidence at protein level"/>
<reference key="1">
    <citation type="journal article" date="2005" name="Nature">
        <title>The map-based sequence of the rice genome.</title>
        <authorList>
            <consortium name="International rice genome sequencing project (IRGSP)"/>
        </authorList>
    </citation>
    <scope>NUCLEOTIDE SEQUENCE [LARGE SCALE GENOMIC DNA]</scope>
    <source>
        <strain>cv. Nipponbare</strain>
    </source>
</reference>
<reference key="2">
    <citation type="journal article" date="2008" name="Nucleic Acids Res.">
        <title>The rice annotation project database (RAP-DB): 2008 update.</title>
        <authorList>
            <consortium name="The rice annotation project (RAP)"/>
        </authorList>
    </citation>
    <scope>GENOME REANNOTATION</scope>
    <source>
        <strain>cv. Nipponbare</strain>
    </source>
</reference>
<reference key="3">
    <citation type="journal article" date="2013" name="Rice">
        <title>Improvement of the Oryza sativa Nipponbare reference genome using next generation sequence and optical map data.</title>
        <authorList>
            <person name="Kawahara Y."/>
            <person name="de la Bastide M."/>
            <person name="Hamilton J.P."/>
            <person name="Kanamori H."/>
            <person name="McCombie W.R."/>
            <person name="Ouyang S."/>
            <person name="Schwartz D.C."/>
            <person name="Tanaka T."/>
            <person name="Wu J."/>
            <person name="Zhou S."/>
            <person name="Childs K.L."/>
            <person name="Davidson R.M."/>
            <person name="Lin H."/>
            <person name="Quesada-Ocampo L."/>
            <person name="Vaillancourt B."/>
            <person name="Sakai H."/>
            <person name="Lee S.S."/>
            <person name="Kim J."/>
            <person name="Numa H."/>
            <person name="Itoh T."/>
            <person name="Buell C.R."/>
            <person name="Matsumoto T."/>
        </authorList>
    </citation>
    <scope>GENOME REANNOTATION</scope>
    <source>
        <strain>cv. Nipponbare</strain>
    </source>
</reference>
<reference key="4">
    <citation type="journal article" date="2003" name="Science">
        <title>Collection, mapping, and annotation of over 28,000 cDNA clones from japonica rice.</title>
        <authorList>
            <consortium name="The rice full-length cDNA consortium"/>
        </authorList>
    </citation>
    <scope>NUCLEOTIDE SEQUENCE [LARGE SCALE MRNA]</scope>
    <source>
        <strain>cv. Nipponbare</strain>
    </source>
</reference>
<reference key="5">
    <citation type="journal article" date="2005" name="Plant Cell Physiol.">
        <title>Suppression of tiller bud activity in tillering dwarf mutants of rice.</title>
        <authorList>
            <person name="Ishikawa S."/>
            <person name="Maekawa M."/>
            <person name="Arite T."/>
            <person name="Onishi K."/>
            <person name="Takamure I."/>
            <person name="Kyozuka J."/>
        </authorList>
    </citation>
    <scope>FUNCTION</scope>
    <scope>TISSUE SPECIFICITY</scope>
    <scope>DISRUPTION PHENOTYPE</scope>
    <source>
        <strain>cv. Shiokari</strain>
    </source>
</reference>
<reference key="6">
    <citation type="journal article" date="2007" name="Plant J.">
        <title>DWARF10, an RMS1/MAX4/DAD1 ortholog, controls lateral bud outgrowth in rice.</title>
        <authorList>
            <person name="Arite T."/>
            <person name="Iwata H."/>
            <person name="Ohshima K."/>
            <person name="Maekawa M."/>
            <person name="Nakajima M."/>
            <person name="Kojima M."/>
            <person name="Sakakibara H."/>
            <person name="Kyozuka J."/>
        </authorList>
    </citation>
    <scope>DISRUPTION PHENOTYPE</scope>
    <source>
        <strain>cv. Shiokari</strain>
    </source>
</reference>
<reference key="7">
    <citation type="journal article" date="2008" name="Nature">
        <title>Inhibition of shoot branching by new terpenoid plant hormones.</title>
        <authorList>
            <person name="Umehara M."/>
            <person name="Hanada A."/>
            <person name="Yoshida S."/>
            <person name="Akiyama K."/>
            <person name="Arite T."/>
            <person name="Takeda-Kamiya N."/>
            <person name="Magome H."/>
            <person name="Kamiya Y."/>
            <person name="Shirasu K."/>
            <person name="Yoneyama K."/>
            <person name="Kyozuka J."/>
            <person name="Yamaguchi S."/>
        </authorList>
    </citation>
    <scope>DISRUPTION PHENOTYPE</scope>
    <source>
        <strain>cv. Shiokari</strain>
    </source>
</reference>
<reference key="8">
    <citation type="journal article" date="2012" name="New Phytol.">
        <title>The D3 F-box protein is a key component in host strigolactone responses essential for arbuscular mycorrhizal symbiosis.</title>
        <authorList>
            <person name="Yoshida S."/>
            <person name="Kameoka H."/>
            <person name="Tempo M."/>
            <person name="Akiyama K."/>
            <person name="Umehara M."/>
            <person name="Yamaguchi S."/>
            <person name="Hayashi H."/>
            <person name="Kyozuka J."/>
            <person name="Shirasu K."/>
        </authorList>
    </citation>
    <scope>FUNCTION</scope>
    <source>
        <strain>cv. Shiokari</strain>
    </source>
</reference>
<reference key="9">
    <citation type="journal article" date="2013" name="Nature">
        <title>DWARF 53 acts as a repressor of strigolactone signalling in rice.</title>
        <authorList>
            <person name="Jiang L."/>
            <person name="Liu X."/>
            <person name="Xiong G."/>
            <person name="Liu H."/>
            <person name="Chen F."/>
            <person name="Wang L."/>
            <person name="Meng X."/>
            <person name="Liu G."/>
            <person name="Yu H."/>
            <person name="Yuan Y."/>
            <person name="Yi W."/>
            <person name="Zhao L."/>
            <person name="Ma H."/>
            <person name="He Y."/>
            <person name="Wu Z."/>
            <person name="Melcher K."/>
            <person name="Qian Q."/>
            <person name="Xu H.E."/>
            <person name="Wang Y."/>
            <person name="Li J."/>
        </authorList>
    </citation>
    <scope>MUTAGENESIS OF PRO-21 AND ARG-36</scope>
    <scope>INTERACTION WITH D14</scope>
</reference>
<reference key="10">
    <citation type="journal article" date="2013" name="Nature">
        <title>D14-SCF(D3)-dependent degradation of D53 regulates strigolactone signalling.</title>
        <authorList>
            <person name="Zhou F."/>
            <person name="Lin Q."/>
            <person name="Zhu L."/>
            <person name="Ren Y."/>
            <person name="Zhou K."/>
            <person name="Shabek N."/>
            <person name="Wu F."/>
            <person name="Mao H."/>
            <person name="Dong W."/>
            <person name="Gan L."/>
            <person name="Ma W."/>
            <person name="Gao H."/>
            <person name="Chen J."/>
            <person name="Yang C."/>
            <person name="Wang D."/>
            <person name="Tan J."/>
            <person name="Zhang X."/>
            <person name="Guo X."/>
            <person name="Wang J."/>
            <person name="Jiang L."/>
            <person name="Liu X."/>
            <person name="Chen W."/>
            <person name="Chu J."/>
            <person name="Yan C."/>
            <person name="Ueno K."/>
            <person name="Ito S."/>
            <person name="Asami T."/>
            <person name="Cheng Z."/>
            <person name="Wang J."/>
            <person name="Lei C."/>
            <person name="Zhai H."/>
            <person name="Wu C."/>
            <person name="Wang H."/>
            <person name="Zheng N."/>
            <person name="Wan J."/>
        </authorList>
    </citation>
    <scope>FUNCTION</scope>
    <scope>INTERACTION WITH D14</scope>
</reference>
<reference key="11">
    <citation type="journal article" date="2014" name="Curr. Opin. Plant Biol.">
        <title>Strigolactone signalling: standing on the shoulders of DWARFs.</title>
        <authorList>
            <person name="Bennett T."/>
            <person name="Leyser O."/>
        </authorList>
    </citation>
    <scope>REVIEW</scope>
</reference>
<reference key="12">
    <citation type="journal article" date="2014" name="Plant Cell Physiol.">
        <title>DWARF3 participates in an SCF complex and associates with DWARF14 to suppress rice shoot branching.</title>
        <authorList>
            <person name="Zhao J."/>
            <person name="Wang T."/>
            <person name="Wang M."/>
            <person name="Liu Y."/>
            <person name="Yuan S."/>
            <person name="Gao Y."/>
            <person name="Yin L."/>
            <person name="Sun W."/>
            <person name="Peng L."/>
            <person name="Zhang W."/>
            <person name="Wan J."/>
            <person name="Li X."/>
        </authorList>
    </citation>
    <scope>FUNCTION</scope>
    <scope>INTERACTION WITH D14; SKP1; SKP5; SKP20 AND CUL1</scope>
    <scope>SUBCELLULAR LOCATION</scope>
    <scope>TISSUE SPECIFICITY</scope>
    <scope>DISRUPTION PHENOTYPE</scope>
</reference>
<reference key="13">
    <citation type="journal article" date="2016" name="Nature">
        <title>DWARF14 is a non-canonical hormone receptor for strigolactone.</title>
        <authorList>
            <person name="Yao R."/>
            <person name="Ming Z."/>
            <person name="Yan L."/>
            <person name="Li S."/>
            <person name="Wang F."/>
            <person name="Ma S."/>
            <person name="Yu C."/>
            <person name="Yang M."/>
            <person name="Chen L."/>
            <person name="Chen L."/>
            <person name="Li Y."/>
            <person name="Yan C."/>
            <person name="Miao D."/>
            <person name="Sun Z."/>
            <person name="Yan J."/>
            <person name="Sun Y."/>
            <person name="Wang L."/>
            <person name="Chu J."/>
            <person name="Fan S."/>
            <person name="He W."/>
            <person name="Deng H."/>
            <person name="Nan F."/>
            <person name="Li J."/>
            <person name="Rao Z."/>
            <person name="Lou Z."/>
            <person name="Xie D."/>
        </authorList>
    </citation>
    <scope>X-RAY CRYSTALLOGRAPHY (3.01 ANGSTROMS)</scope>
</reference>
<reference key="14">
    <citation type="journal article" date="2018" name="Nature">
        <title>Structural plasticity of D3-D14 ubiquitin ligase in strigolactone signalling.</title>
        <authorList>
            <person name="Shabek N."/>
            <person name="Ticchiarelli F."/>
            <person name="Mao H."/>
            <person name="Hinds T.R."/>
            <person name="Leyser O."/>
            <person name="Zheng N."/>
        </authorList>
    </citation>
    <scope>X-RAY CRYSTALLOGRAPHY (2.39 ANGSTROMS) OF 1-476 AND 516-720</scope>
</reference>